<geneLocation type="chloroplast"/>
<proteinExistence type="predicted"/>
<accession>P31918</accession>
<protein>
    <recommendedName>
        <fullName>Uncharacterized 33.0 kDa protein in psbD intron 8</fullName>
    </recommendedName>
    <alternativeName>
        <fullName>ORF281A</fullName>
    </alternativeName>
</protein>
<sequence>MFLKDIHQFFLGFVITNTIIVIIGQINLQFKNSYNIVSGLKVQQLDSIKYYCKVLTHDSSCLFFRNCLAVIDSIIVNIDEYLSLSPFKRREKFLQDVESLNNPSVPARLFINPKKDFILIHRKGVSLKIRSTFQMYSIYKFNVSVSKNAAIFNTLRPSDFISFLEYYSDMNINEILINVLNNYGLNDISLFLVKKIFYLFDSDKIFFNEFIGVDSVPLEYFLLFLSKKYIIRARKESPLKIYTDFEDFYIHGSFKNILKMQQQKIKQNLGFKTKSNFFTGI</sequence>
<comment type="subcellular location">
    <subcellularLocation>
        <location>Plastid</location>
        <location>Chloroplast</location>
    </subcellularLocation>
</comment>
<reference key="1">
    <citation type="journal article" date="1993" name="Nucleic Acids Res.">
        <title>Complete sequence of Euglena gracilis chloroplast DNA.</title>
        <authorList>
            <person name="Hallick R.B."/>
            <person name="Hong L."/>
            <person name="Drager R.G."/>
            <person name="Favreau M.R."/>
            <person name="Monfort A."/>
            <person name="Orsat B."/>
            <person name="Spielmann A."/>
            <person name="Stutz E."/>
        </authorList>
    </citation>
    <scope>NUCLEOTIDE SEQUENCE [LARGE SCALE GENOMIC DNA]</scope>
    <source>
        <strain>Z / UTEX 753</strain>
    </source>
</reference>
<name>YCX1_EUGGR</name>
<organism>
    <name type="scientific">Euglena gracilis</name>
    <dbReference type="NCBI Taxonomy" id="3039"/>
    <lineage>
        <taxon>Eukaryota</taxon>
        <taxon>Discoba</taxon>
        <taxon>Euglenozoa</taxon>
        <taxon>Euglenida</taxon>
        <taxon>Spirocuta</taxon>
        <taxon>Euglenophyceae</taxon>
        <taxon>Euglenales</taxon>
        <taxon>Euglenaceae</taxon>
        <taxon>Euglena</taxon>
    </lineage>
</organism>
<dbReference type="EMBL" id="Z11874">
    <property type="status" value="NOT_ANNOTATED_CDS"/>
    <property type="molecule type" value="Genomic_DNA"/>
</dbReference>
<dbReference type="EMBL" id="X70810">
    <property type="protein sequence ID" value="CAA50077.1"/>
    <property type="molecule type" value="Genomic_DNA"/>
</dbReference>
<dbReference type="PIR" id="S34496">
    <property type="entry name" value="S34496"/>
</dbReference>
<dbReference type="RefSeq" id="NP_041890.1">
    <property type="nucleotide sequence ID" value="NC_001603.2"/>
</dbReference>
<dbReference type="GeneID" id="7564689"/>
<dbReference type="GO" id="GO:0009507">
    <property type="term" value="C:chloroplast"/>
    <property type="evidence" value="ECO:0007669"/>
    <property type="project" value="UniProtKB-SubCell"/>
</dbReference>
<feature type="chain" id="PRO_0000217435" description="Uncharacterized 33.0 kDa protein in psbD intron 8">
    <location>
        <begin position="1"/>
        <end position="281"/>
    </location>
</feature>
<keyword id="KW-0150">Chloroplast</keyword>
<keyword id="KW-0934">Plastid</keyword>